<comment type="subcellular location">
    <subcellularLocation>
        <location evidence="2">Membrane</location>
        <topology evidence="2">Multi-pass membrane protein</topology>
    </subcellularLocation>
</comment>
<comment type="similarity">
    <text evidence="2">Belongs to the nematode receptor-like protein sra family.</text>
</comment>
<accession>O17847</accession>
<accession>O18132</accession>
<name>SRA25_CAEEL</name>
<gene>
    <name type="primary">sra-25</name>
    <name type="ORF">T26E3.9</name>
</gene>
<feature type="chain" id="PRO_0000104487" description="Serpentine receptor class alpha-25">
    <location>
        <begin position="1"/>
        <end position="335"/>
    </location>
</feature>
<feature type="transmembrane region" description="Helical" evidence="1">
    <location>
        <begin position="22"/>
        <end position="42"/>
    </location>
</feature>
<feature type="transmembrane region" description="Helical" evidence="1">
    <location>
        <begin position="151"/>
        <end position="171"/>
    </location>
</feature>
<feature type="transmembrane region" description="Helical" evidence="1">
    <location>
        <begin position="195"/>
        <end position="215"/>
    </location>
</feature>
<feature type="transmembrane region" description="Helical" evidence="1">
    <location>
        <begin position="245"/>
        <end position="265"/>
    </location>
</feature>
<feature type="transmembrane region" description="Helical" evidence="1">
    <location>
        <begin position="280"/>
        <end position="300"/>
    </location>
</feature>
<proteinExistence type="inferred from homology"/>
<sequence>MNELIDGPKCASEGIVNAMTSIPVKISFLIIATVIFLSFYFARLAILALLRNNIFSNSTQRILLVCLVNSVFHQAATLEIRIHQVYRSFVYASDPCSLLFHFTECEVELYFYYLTNYFSTYSVFSLTFDRLISHYNPRFYFSQQNFVSNTLLIIQCLLSFGTYYVGLYGVPPFGYVSICYYTPKYAVNFLKINDFRTVVMVFCIIVIIFVYYLSVRSEKQIQRTSYSPGERYWAYENVETSQSVCILIVLQFACILMSSYGVNYIRSKESMMSEEDFHTLAPFFAGVTYASLCLPLVIYFKTKLTIRNRRIRIAVMTSMYGDVGDHMNRLKKSWE</sequence>
<keyword id="KW-0472">Membrane</keyword>
<keyword id="KW-1185">Reference proteome</keyword>
<keyword id="KW-0812">Transmembrane</keyword>
<keyword id="KW-1133">Transmembrane helix</keyword>
<protein>
    <recommendedName>
        <fullName>Serpentine receptor class alpha-25</fullName>
        <shortName>Protein sra-25</shortName>
    </recommendedName>
</protein>
<organism>
    <name type="scientific">Caenorhabditis elegans</name>
    <dbReference type="NCBI Taxonomy" id="6239"/>
    <lineage>
        <taxon>Eukaryota</taxon>
        <taxon>Metazoa</taxon>
        <taxon>Ecdysozoa</taxon>
        <taxon>Nematoda</taxon>
        <taxon>Chromadorea</taxon>
        <taxon>Rhabditida</taxon>
        <taxon>Rhabditina</taxon>
        <taxon>Rhabditomorpha</taxon>
        <taxon>Rhabditoidea</taxon>
        <taxon>Rhabditidae</taxon>
        <taxon>Peloderinae</taxon>
        <taxon>Caenorhabditis</taxon>
    </lineage>
</organism>
<reference key="1">
    <citation type="journal article" date="1998" name="Science">
        <title>Genome sequence of the nematode C. elegans: a platform for investigating biology.</title>
        <authorList>
            <consortium name="The C. elegans sequencing consortium"/>
        </authorList>
    </citation>
    <scope>NUCLEOTIDE SEQUENCE [LARGE SCALE GENOMIC DNA]</scope>
    <source>
        <strain>Bristol N2</strain>
    </source>
</reference>
<dbReference type="EMBL" id="Z82053">
    <property type="protein sequence ID" value="CAB04839.2"/>
    <property type="molecule type" value="Genomic_DNA"/>
</dbReference>
<dbReference type="EMBL" id="Z93380">
    <property type="protein sequence ID" value="CAB04839.2"/>
    <property type="status" value="JOINED"/>
    <property type="molecule type" value="Genomic_DNA"/>
</dbReference>
<dbReference type="PIR" id="T21479">
    <property type="entry name" value="T21479"/>
</dbReference>
<dbReference type="RefSeq" id="NP_493211.2">
    <property type="nucleotide sequence ID" value="NM_060810.2"/>
</dbReference>
<dbReference type="FunCoup" id="O17847">
    <property type="interactions" value="9"/>
</dbReference>
<dbReference type="STRING" id="6239.T26E3.9.1"/>
<dbReference type="PaxDb" id="6239-T26E3.9"/>
<dbReference type="EnsemblMetazoa" id="T26E3.9.1">
    <property type="protein sequence ID" value="T26E3.9.1"/>
    <property type="gene ID" value="WBGene00005051"/>
</dbReference>
<dbReference type="GeneID" id="188926"/>
<dbReference type="KEGG" id="cel:CELE_T26E3.9"/>
<dbReference type="UCSC" id="T26E3.9">
    <property type="organism name" value="c. elegans"/>
</dbReference>
<dbReference type="AGR" id="WB:WBGene00005051"/>
<dbReference type="CTD" id="188926"/>
<dbReference type="WormBase" id="T26E3.9">
    <property type="protein sequence ID" value="CE33461"/>
    <property type="gene ID" value="WBGene00005051"/>
    <property type="gene designation" value="sra-25"/>
</dbReference>
<dbReference type="eggNOG" id="ENOG502THAY">
    <property type="taxonomic scope" value="Eukaryota"/>
</dbReference>
<dbReference type="GeneTree" id="ENSGT00970000195862"/>
<dbReference type="HOGENOM" id="CLU_070413_0_0_1"/>
<dbReference type="InParanoid" id="O17847"/>
<dbReference type="PhylomeDB" id="O17847"/>
<dbReference type="PRO" id="PR:O17847"/>
<dbReference type="Proteomes" id="UP000001940">
    <property type="component" value="Chromosome I"/>
</dbReference>
<dbReference type="GO" id="GO:0016020">
    <property type="term" value="C:membrane"/>
    <property type="evidence" value="ECO:0007669"/>
    <property type="project" value="UniProtKB-SubCell"/>
</dbReference>
<dbReference type="GO" id="GO:0004930">
    <property type="term" value="F:G protein-coupled receptor activity"/>
    <property type="evidence" value="ECO:0007669"/>
    <property type="project" value="InterPro"/>
</dbReference>
<dbReference type="GO" id="GO:0007606">
    <property type="term" value="P:sensory perception of chemical stimulus"/>
    <property type="evidence" value="ECO:0007669"/>
    <property type="project" value="InterPro"/>
</dbReference>
<dbReference type="Gene3D" id="1.20.1070.10">
    <property type="entry name" value="Rhodopsin 7-helix transmembrane proteins"/>
    <property type="match status" value="1"/>
</dbReference>
<dbReference type="InterPro" id="IPR000344">
    <property type="entry name" value="7TM_GPCR_serpentine_rcpt_Sra"/>
</dbReference>
<dbReference type="PANTHER" id="PTHR31582:SF2">
    <property type="entry name" value="G-PROTEIN COUPLED RECEPTORS FAMILY 1 PROFILE DOMAIN-CONTAINING PROTEIN-RELATED"/>
    <property type="match status" value="1"/>
</dbReference>
<dbReference type="PANTHER" id="PTHR31582">
    <property type="entry name" value="SERPENTINE RECEPTOR, CLASS A (ALPHA)-RELATED-RELATED"/>
    <property type="match status" value="1"/>
</dbReference>
<dbReference type="Pfam" id="PF02117">
    <property type="entry name" value="7TM_GPCR_Sra"/>
    <property type="match status" value="1"/>
</dbReference>
<dbReference type="PRINTS" id="PR00697">
    <property type="entry name" value="TMPROTEINSRA"/>
</dbReference>
<evidence type="ECO:0000255" key="1"/>
<evidence type="ECO:0000305" key="2"/>